<gene>
    <name evidence="6" type="primary">Mcat</name>
    <name type="synonym">Mt</name>
</gene>
<proteinExistence type="evidence at protein level"/>
<evidence type="ECO:0000250" key="1">
    <source>
        <dbReference type="UniProtKB" id="P0AAI9"/>
    </source>
</evidence>
<evidence type="ECO:0000250" key="2">
    <source>
        <dbReference type="UniProtKB" id="Q8IVS2"/>
    </source>
</evidence>
<evidence type="ECO:0000255" key="3"/>
<evidence type="ECO:0000269" key="4">
    <source>
    </source>
</evidence>
<evidence type="ECO:0000305" key="5"/>
<evidence type="ECO:0000312" key="6">
    <source>
        <dbReference type="MGI" id="MGI:2388651"/>
    </source>
</evidence>
<evidence type="ECO:0007744" key="7">
    <source>
    </source>
</evidence>
<sequence>MSARVARAGWAWRSWGRRAASSLREPPPDAVDVAELLRDSSVAEEGAQEAVARRRPPSQCSVLLFPGQGCQAVGMGSGLLHLPRVRQLYEAAHRVLGYDLLELCLRGPQEDLDRTVHCQPAVFVASLAAVEKLHHLQPAVIDNCVAAAGFSVGEFAALVFAGAMDFSEGLYAVKARAEAMQEASEAVPSGMLSVLGQRQSNFSFACLEAQEHCKSLGIENPVCQVSNYLFPDCRVISGHLEALQFLRRNSAKYHFRRTKMLPVSGGFHTCLMEPAVDPLMKVLGSINIKKPLVAVHSNVSGQKYTHPQHIRKLLGQQVVSPVKWEQTMHSIYERKKGMEFPSTYEVGPGQQLGSILKCCNRQAWKSYSHVDVMQNIMDPDP</sequence>
<dbReference type="EC" id="2.3.1.39" evidence="2"/>
<dbReference type="EMBL" id="BC099494">
    <property type="protein sequence ID" value="AAH99494.1"/>
    <property type="molecule type" value="mRNA"/>
</dbReference>
<dbReference type="EMBL" id="BC025519">
    <property type="protein sequence ID" value="AAH25519.1"/>
    <property type="status" value="ALT_INIT"/>
    <property type="molecule type" value="mRNA"/>
</dbReference>
<dbReference type="CCDS" id="CCDS27704.1"/>
<dbReference type="RefSeq" id="NP_001025185.1">
    <property type="nucleotide sequence ID" value="NM_001030014.3"/>
</dbReference>
<dbReference type="SMR" id="Q8R3F5"/>
<dbReference type="BioGRID" id="230182">
    <property type="interactions" value="1"/>
</dbReference>
<dbReference type="FunCoup" id="Q8R3F5">
    <property type="interactions" value="2325"/>
</dbReference>
<dbReference type="STRING" id="10090.ENSMUSP00000051569"/>
<dbReference type="GlyGen" id="Q8R3F5">
    <property type="glycosylation" value="2 sites, 1 N-linked glycan (1 site), 1 O-linked glycan (1 site)"/>
</dbReference>
<dbReference type="iPTMnet" id="Q8R3F5"/>
<dbReference type="PhosphoSitePlus" id="Q8R3F5"/>
<dbReference type="SwissPalm" id="Q8R3F5"/>
<dbReference type="jPOST" id="Q8R3F5"/>
<dbReference type="PaxDb" id="10090-ENSMUSP00000051569"/>
<dbReference type="PeptideAtlas" id="Q8R3F5"/>
<dbReference type="ProteomicsDB" id="271546"/>
<dbReference type="Pumba" id="Q8R3F5"/>
<dbReference type="Antibodypedia" id="27475">
    <property type="antibodies" value="225 antibodies from 23 providers"/>
</dbReference>
<dbReference type="DNASU" id="223722"/>
<dbReference type="Ensembl" id="ENSMUST00000061882.10">
    <property type="protein sequence ID" value="ENSMUSP00000051569.9"/>
    <property type="gene ID" value="ENSMUSG00000048755.10"/>
</dbReference>
<dbReference type="GeneID" id="223722"/>
<dbReference type="KEGG" id="mmu:223722"/>
<dbReference type="UCSC" id="uc007xbf.1">
    <property type="organism name" value="mouse"/>
</dbReference>
<dbReference type="AGR" id="MGI:2388651"/>
<dbReference type="CTD" id="27349"/>
<dbReference type="MGI" id="MGI:2388651">
    <property type="gene designation" value="Mcat"/>
</dbReference>
<dbReference type="VEuPathDB" id="HostDB:ENSMUSG00000048755"/>
<dbReference type="eggNOG" id="KOG2926">
    <property type="taxonomic scope" value="Eukaryota"/>
</dbReference>
<dbReference type="GeneTree" id="ENSGT00390000013715"/>
<dbReference type="HOGENOM" id="CLU_030558_2_1_1"/>
<dbReference type="InParanoid" id="Q8R3F5"/>
<dbReference type="OMA" id="AANYNCP"/>
<dbReference type="OrthoDB" id="541883at2759"/>
<dbReference type="PhylomeDB" id="Q8R3F5"/>
<dbReference type="TreeFam" id="TF313401"/>
<dbReference type="Reactome" id="R-MMU-77289">
    <property type="pathway name" value="Mitochondrial Fatty Acid Beta-Oxidation"/>
</dbReference>
<dbReference type="UniPathway" id="UPA00094"/>
<dbReference type="BioGRID-ORCS" id="223722">
    <property type="hits" value="24 hits in 82 CRISPR screens"/>
</dbReference>
<dbReference type="ChiTaRS" id="Mcat">
    <property type="organism name" value="mouse"/>
</dbReference>
<dbReference type="PRO" id="PR:Q8R3F5"/>
<dbReference type="Proteomes" id="UP000000589">
    <property type="component" value="Chromosome 15"/>
</dbReference>
<dbReference type="RNAct" id="Q8R3F5">
    <property type="molecule type" value="protein"/>
</dbReference>
<dbReference type="Bgee" id="ENSMUSG00000048755">
    <property type="expression patterns" value="Expressed in spermatocyte and 223 other cell types or tissues"/>
</dbReference>
<dbReference type="ExpressionAtlas" id="Q8R3F5">
    <property type="expression patterns" value="baseline and differential"/>
</dbReference>
<dbReference type="GO" id="GO:0005739">
    <property type="term" value="C:mitochondrion"/>
    <property type="evidence" value="ECO:0007005"/>
    <property type="project" value="MGI"/>
</dbReference>
<dbReference type="GO" id="GO:0004314">
    <property type="term" value="F:[acyl-carrier-protein] S-malonyltransferase activity"/>
    <property type="evidence" value="ECO:0007669"/>
    <property type="project" value="UniProtKB-EC"/>
</dbReference>
<dbReference type="GO" id="GO:0006633">
    <property type="term" value="P:fatty acid biosynthetic process"/>
    <property type="evidence" value="ECO:0007669"/>
    <property type="project" value="UniProtKB-UniPathway"/>
</dbReference>
<dbReference type="GO" id="GO:0180026">
    <property type="term" value="P:mitochondrial small ribosomal subunit assembly"/>
    <property type="evidence" value="ECO:0007669"/>
    <property type="project" value="Ensembl"/>
</dbReference>
<dbReference type="FunFam" id="3.30.70.250:FF:000005">
    <property type="entry name" value="Malonyl-CoA-acyl carrier protein transacylase, mitochondrial"/>
    <property type="match status" value="1"/>
</dbReference>
<dbReference type="Gene3D" id="3.30.70.250">
    <property type="entry name" value="Malonyl-CoA ACP transacylase, ACP-binding"/>
    <property type="match status" value="1"/>
</dbReference>
<dbReference type="Gene3D" id="3.40.366.10">
    <property type="entry name" value="Malonyl-Coenzyme A Acyl Carrier Protein, domain 2"/>
    <property type="match status" value="1"/>
</dbReference>
<dbReference type="InterPro" id="IPR001227">
    <property type="entry name" value="Ac_transferase_dom_sf"/>
</dbReference>
<dbReference type="InterPro" id="IPR014043">
    <property type="entry name" value="Acyl_transferase_dom"/>
</dbReference>
<dbReference type="InterPro" id="IPR016035">
    <property type="entry name" value="Acyl_Trfase/lysoPLipase"/>
</dbReference>
<dbReference type="InterPro" id="IPR016036">
    <property type="entry name" value="Malonyl_transacylase_ACP-bd"/>
</dbReference>
<dbReference type="InterPro" id="IPR052760">
    <property type="entry name" value="Mitochondrial_malonyltrans"/>
</dbReference>
<dbReference type="PANTHER" id="PTHR47170">
    <property type="entry name" value="MALONYL-COA ACP TRANSACYLASE, ACP-BINDING"/>
    <property type="match status" value="1"/>
</dbReference>
<dbReference type="PANTHER" id="PTHR47170:SF2">
    <property type="entry name" value="MALONYL-COA:ACP TRANSACYLASE (MAT) DOMAIN-CONTAINING PROTEIN"/>
    <property type="match status" value="1"/>
</dbReference>
<dbReference type="Pfam" id="PF00698">
    <property type="entry name" value="Acyl_transf_1"/>
    <property type="match status" value="1"/>
</dbReference>
<dbReference type="SMART" id="SM00827">
    <property type="entry name" value="PKS_AT"/>
    <property type="match status" value="1"/>
</dbReference>
<dbReference type="SUPFAM" id="SSF52151">
    <property type="entry name" value="FabD/lysophospholipase-like"/>
    <property type="match status" value="1"/>
</dbReference>
<dbReference type="SUPFAM" id="SSF55048">
    <property type="entry name" value="Probable ACP-binding domain of malonyl-CoA ACP transacylase"/>
    <property type="match status" value="1"/>
</dbReference>
<comment type="function">
    <text evidence="2">Catalyzes the transfer of a malonyl moiety from malonyl-CoA to the free thiol group of the phosphopantetheine arm of the mitochondrial ACP protein (NDUFAB1). This suggests the existence of the biosynthesis of fatty acids in mitochondria.</text>
</comment>
<comment type="catalytic activity">
    <reaction evidence="2">
        <text>holo-[ACP] + malonyl-CoA = malonyl-[ACP] + CoA</text>
        <dbReference type="Rhea" id="RHEA:41792"/>
        <dbReference type="Rhea" id="RHEA-COMP:9623"/>
        <dbReference type="Rhea" id="RHEA-COMP:9685"/>
        <dbReference type="ChEBI" id="CHEBI:57287"/>
        <dbReference type="ChEBI" id="CHEBI:57384"/>
        <dbReference type="ChEBI" id="CHEBI:64479"/>
        <dbReference type="ChEBI" id="CHEBI:78449"/>
        <dbReference type="EC" id="2.3.1.39"/>
    </reaction>
    <physiologicalReaction direction="left-to-right" evidence="2">
        <dbReference type="Rhea" id="RHEA:41793"/>
    </physiologicalReaction>
</comment>
<comment type="pathway">
    <text>Lipid metabolism; fatty acid biosynthesis.</text>
</comment>
<comment type="subcellular location">
    <subcellularLocation>
        <location evidence="2">Mitochondrion</location>
    </subcellularLocation>
</comment>
<comment type="tissue specificity">
    <text evidence="4">Expressed in retinal ganglion cells.</text>
</comment>
<comment type="disruption phenotype">
    <text evidence="4">Conditional deletion in retinal ganglion cells leads to disruption of retinal ganglion cell axons.</text>
</comment>
<comment type="similarity">
    <text evidence="5">Belongs to the type II malonyltransferase family.</text>
</comment>
<comment type="sequence caution" evidence="5">
    <conflict type="erroneous initiation">
        <sequence resource="EMBL-CDS" id="AAH25519"/>
    </conflict>
    <text>Extended N-terminus.</text>
</comment>
<accession>Q8R3F5</accession>
<accession>Q4FZH0</accession>
<reference key="1">
    <citation type="journal article" date="2004" name="Genome Res.">
        <title>The status, quality, and expansion of the NIH full-length cDNA project: the Mammalian Gene Collection (MGC).</title>
        <authorList>
            <consortium name="The MGC Project Team"/>
        </authorList>
    </citation>
    <scope>NUCLEOTIDE SEQUENCE [LARGE SCALE MRNA]</scope>
    <source>
        <tissue>Thyroid</tissue>
    </source>
</reference>
<reference key="2">
    <citation type="journal article" date="2010" name="Cell">
        <title>A tissue-specific atlas of mouse protein phosphorylation and expression.</title>
        <authorList>
            <person name="Huttlin E.L."/>
            <person name="Jedrychowski M.P."/>
            <person name="Elias J.E."/>
            <person name="Goswami T."/>
            <person name="Rad R."/>
            <person name="Beausoleil S.A."/>
            <person name="Villen J."/>
            <person name="Haas W."/>
            <person name="Sowa M.E."/>
            <person name="Gygi S.P."/>
        </authorList>
    </citation>
    <scope>IDENTIFICATION BY MASS SPECTROMETRY [LARGE SCALE ANALYSIS]</scope>
    <source>
        <tissue>Brain</tissue>
        <tissue>Brown adipose tissue</tissue>
        <tissue>Heart</tissue>
        <tissue>Kidney</tissue>
        <tissue>Liver</tissue>
        <tissue>Lung</tissue>
        <tissue>Pancreas</tissue>
        <tissue>Spleen</tissue>
        <tissue>Testis</tissue>
    </source>
</reference>
<reference key="3">
    <citation type="journal article" date="2013" name="Mol. Cell">
        <title>SIRT5-mediated lysine desuccinylation impacts diverse metabolic pathways.</title>
        <authorList>
            <person name="Park J."/>
            <person name="Chen Y."/>
            <person name="Tishkoff D.X."/>
            <person name="Peng C."/>
            <person name="Tan M."/>
            <person name="Dai L."/>
            <person name="Xie Z."/>
            <person name="Zhang Y."/>
            <person name="Zwaans B.M."/>
            <person name="Skinner M.E."/>
            <person name="Lombard D.B."/>
            <person name="Zhao Y."/>
        </authorList>
    </citation>
    <scope>SUCCINYLATION [LARGE SCALE ANALYSIS] AT LYS-312</scope>
    <scope>IDENTIFICATION BY MASS SPECTROMETRY [LARGE SCALE ANALYSIS]</scope>
    <source>
        <tissue>Embryonic fibroblast</tissue>
    </source>
</reference>
<reference key="4">
    <citation type="journal article" date="2020" name="Hum. Mol. Genet.">
        <title>Novel mutations in malonyl-CoA-acyl carrier protein transacylase provoke autosomal recessive optic neuropathy.</title>
        <authorList>
            <person name="Li H."/>
            <person name="Yuan S."/>
            <person name="Minegishi Y."/>
            <person name="Suga A."/>
            <person name="Yoshitake K."/>
            <person name="Sheng X."/>
            <person name="Ye J."/>
            <person name="Smith S."/>
            <person name="Bunkoczi G."/>
            <person name="Yamamoto M."/>
            <person name="Iwata T."/>
        </authorList>
    </citation>
    <scope>DISRUPTION PHENOTYPE</scope>
    <scope>TISSUE SPECIFICITY</scope>
</reference>
<protein>
    <recommendedName>
        <fullName evidence="5">Malonyl-CoA-acyl carrier protein transacylase, mitochondrial</fullName>
        <shortName>MCT</shortName>
        <ecNumber evidence="2">2.3.1.39</ecNumber>
    </recommendedName>
    <alternativeName>
        <fullName>Mitochondrial malonyltransferase</fullName>
    </alternativeName>
    <alternativeName>
        <fullName>[Acyl-carrier-protein] malonyltransferase</fullName>
    </alternativeName>
</protein>
<name>FABD_MOUSE</name>
<organism>
    <name type="scientific">Mus musculus</name>
    <name type="common">Mouse</name>
    <dbReference type="NCBI Taxonomy" id="10090"/>
    <lineage>
        <taxon>Eukaryota</taxon>
        <taxon>Metazoa</taxon>
        <taxon>Chordata</taxon>
        <taxon>Craniata</taxon>
        <taxon>Vertebrata</taxon>
        <taxon>Euteleostomi</taxon>
        <taxon>Mammalia</taxon>
        <taxon>Eutheria</taxon>
        <taxon>Euarchontoglires</taxon>
        <taxon>Glires</taxon>
        <taxon>Rodentia</taxon>
        <taxon>Myomorpha</taxon>
        <taxon>Muroidea</taxon>
        <taxon>Muridae</taxon>
        <taxon>Murinae</taxon>
        <taxon>Mus</taxon>
        <taxon>Mus</taxon>
    </lineage>
</organism>
<keyword id="KW-0275">Fatty acid biosynthesis</keyword>
<keyword id="KW-0276">Fatty acid metabolism</keyword>
<keyword id="KW-0444">Lipid biosynthesis</keyword>
<keyword id="KW-0443">Lipid metabolism</keyword>
<keyword id="KW-0496">Mitochondrion</keyword>
<keyword id="KW-1185">Reference proteome</keyword>
<keyword id="KW-0808">Transferase</keyword>
<keyword id="KW-0809">Transit peptide</keyword>
<feature type="transit peptide" description="Mitochondrion" evidence="3">
    <location>
        <begin position="1"/>
        <end status="unknown"/>
    </location>
</feature>
<feature type="chain" id="PRO_0000042239" description="Malonyl-CoA-acyl carrier protein transacylase, mitochondrial">
    <location>
        <begin status="unknown"/>
        <end position="381"/>
    </location>
</feature>
<feature type="active site" evidence="1">
    <location>
        <position position="151"/>
    </location>
</feature>
<feature type="active site" evidence="1">
    <location>
        <position position="268"/>
    </location>
</feature>
<feature type="modified residue" description="N6-succinyllysine" evidence="7">
    <location>
        <position position="312"/>
    </location>
</feature>